<gene>
    <name evidence="18" type="primary">PSMB7</name>
    <name type="synonym">Z</name>
</gene>
<accession>Q99436</accession>
<accession>B4E0P1</accession>
<accession>Q5TBG6</accession>
<accession>Q96AG8</accession>
<accession>Q9BWA7</accession>
<keyword id="KW-0002">3D-structure</keyword>
<keyword id="KW-0025">Alternative splicing</keyword>
<keyword id="KW-0963">Cytoplasm</keyword>
<keyword id="KW-0903">Direct protein sequencing</keyword>
<keyword id="KW-0945">Host-virus interaction</keyword>
<keyword id="KW-0378">Hydrolase</keyword>
<keyword id="KW-0539">Nucleus</keyword>
<keyword id="KW-0645">Protease</keyword>
<keyword id="KW-0647">Proteasome</keyword>
<keyword id="KW-1267">Proteomics identification</keyword>
<keyword id="KW-1185">Reference proteome</keyword>
<keyword id="KW-0888">Threonine protease</keyword>
<keyword id="KW-0865">Zymogen</keyword>
<organism>
    <name type="scientific">Homo sapiens</name>
    <name type="common">Human</name>
    <dbReference type="NCBI Taxonomy" id="9606"/>
    <lineage>
        <taxon>Eukaryota</taxon>
        <taxon>Metazoa</taxon>
        <taxon>Chordata</taxon>
        <taxon>Craniata</taxon>
        <taxon>Vertebrata</taxon>
        <taxon>Euteleostomi</taxon>
        <taxon>Mammalia</taxon>
        <taxon>Eutheria</taxon>
        <taxon>Euarchontoglires</taxon>
        <taxon>Primates</taxon>
        <taxon>Haplorrhini</taxon>
        <taxon>Catarrhini</taxon>
        <taxon>Hominidae</taxon>
        <taxon>Homo</taxon>
    </lineage>
</organism>
<name>PSB7_HUMAN</name>
<evidence type="ECO:0000255" key="1">
    <source>
        <dbReference type="PROSITE-ProRule" id="PRU00809"/>
    </source>
</evidence>
<evidence type="ECO:0000269" key="2">
    <source>
    </source>
</evidence>
<evidence type="ECO:0000269" key="3">
    <source>
    </source>
</evidence>
<evidence type="ECO:0000269" key="4">
    <source>
    </source>
</evidence>
<evidence type="ECO:0000269" key="5">
    <source>
    </source>
</evidence>
<evidence type="ECO:0000269" key="6">
    <source>
    </source>
</evidence>
<evidence type="ECO:0000269" key="7">
    <source>
    </source>
</evidence>
<evidence type="ECO:0000269" key="8">
    <source>
    </source>
</evidence>
<evidence type="ECO:0000269" key="9">
    <source>
    </source>
</evidence>
<evidence type="ECO:0000269" key="10">
    <source>
    </source>
</evidence>
<evidence type="ECO:0000269" key="11">
    <source>
    </source>
</evidence>
<evidence type="ECO:0000269" key="12">
    <source>
    </source>
</evidence>
<evidence type="ECO:0000269" key="13">
    <source>
    </source>
</evidence>
<evidence type="ECO:0000269" key="14">
    <source>
    </source>
</evidence>
<evidence type="ECO:0000303" key="15">
    <source>
    </source>
</evidence>
<evidence type="ECO:0000303" key="16">
    <source>
    </source>
</evidence>
<evidence type="ECO:0000305" key="17"/>
<evidence type="ECO:0000312" key="18">
    <source>
        <dbReference type="HGNC" id="HGNC:9544"/>
    </source>
</evidence>
<evidence type="ECO:0007829" key="19">
    <source>
        <dbReference type="PDB" id="5A0Q"/>
    </source>
</evidence>
<evidence type="ECO:0007829" key="20">
    <source>
        <dbReference type="PDB" id="5LE5"/>
    </source>
</evidence>
<evidence type="ECO:0007829" key="21">
    <source>
        <dbReference type="PDB" id="7NAN"/>
    </source>
</evidence>
<evidence type="ECO:0007829" key="22">
    <source>
        <dbReference type="PDB" id="8QYL"/>
    </source>
</evidence>
<proteinExistence type="evidence at protein level"/>
<dbReference type="EC" id="3.4.25.1" evidence="9"/>
<dbReference type="EMBL" id="D38048">
    <property type="protein sequence ID" value="BAA07238.1"/>
    <property type="molecule type" value="mRNA"/>
</dbReference>
<dbReference type="EMBL" id="AK303460">
    <property type="protein sequence ID" value="BAG64503.1"/>
    <property type="molecule type" value="mRNA"/>
</dbReference>
<dbReference type="EMBL" id="AL137846">
    <property type="status" value="NOT_ANNOTATED_CDS"/>
    <property type="molecule type" value="Genomic_DNA"/>
</dbReference>
<dbReference type="EMBL" id="CH471090">
    <property type="protein sequence ID" value="EAW87582.1"/>
    <property type="molecule type" value="Genomic_DNA"/>
</dbReference>
<dbReference type="EMBL" id="CH471090">
    <property type="protein sequence ID" value="EAW87583.1"/>
    <property type="molecule type" value="Genomic_DNA"/>
</dbReference>
<dbReference type="EMBL" id="BC000509">
    <property type="protein sequence ID" value="AAH00509.1"/>
    <property type="molecule type" value="mRNA"/>
</dbReference>
<dbReference type="EMBL" id="BC008414">
    <property type="status" value="NOT_ANNOTATED_CDS"/>
    <property type="molecule type" value="mRNA"/>
</dbReference>
<dbReference type="EMBL" id="BC017116">
    <property type="protein sequence ID" value="AAH17116.2"/>
    <property type="molecule type" value="mRNA"/>
</dbReference>
<dbReference type="CCDS" id="CCDS6855.1">
    <molecule id="Q99436-1"/>
</dbReference>
<dbReference type="RefSeq" id="NP_002790.1">
    <molecule id="Q99436-1"/>
    <property type="nucleotide sequence ID" value="NM_002799.4"/>
</dbReference>
<dbReference type="PDB" id="4R3O">
    <property type="method" value="X-ray"/>
    <property type="resolution" value="2.60 A"/>
    <property type="chains" value="I/W=44-263"/>
</dbReference>
<dbReference type="PDB" id="4R67">
    <property type="method" value="X-ray"/>
    <property type="resolution" value="2.89 A"/>
    <property type="chains" value="I/W/k/y=44-263"/>
</dbReference>
<dbReference type="PDB" id="5A0Q">
    <property type="method" value="EM"/>
    <property type="resolution" value="3.50 A"/>
    <property type="chains" value="I/W=44-277"/>
</dbReference>
<dbReference type="PDB" id="5GJQ">
    <property type="method" value="EM"/>
    <property type="resolution" value="4.50 A"/>
    <property type="chains" value="b/p=1-277"/>
</dbReference>
<dbReference type="PDB" id="5GJR">
    <property type="method" value="EM"/>
    <property type="resolution" value="3.50 A"/>
    <property type="chains" value="b/p=1-277"/>
</dbReference>
<dbReference type="PDB" id="5L4G">
    <property type="method" value="EM"/>
    <property type="resolution" value="4.02 A"/>
    <property type="chains" value="7/8=1-277"/>
</dbReference>
<dbReference type="PDB" id="5LE5">
    <property type="method" value="X-ray"/>
    <property type="resolution" value="1.80 A"/>
    <property type="chains" value="H/V=44-277"/>
</dbReference>
<dbReference type="PDB" id="5LEX">
    <property type="method" value="X-ray"/>
    <property type="resolution" value="2.20 A"/>
    <property type="chains" value="H/V=44-277"/>
</dbReference>
<dbReference type="PDB" id="5LEY">
    <property type="method" value="X-ray"/>
    <property type="resolution" value="1.90 A"/>
    <property type="chains" value="H/V=44-277"/>
</dbReference>
<dbReference type="PDB" id="5LEZ">
    <property type="method" value="X-ray"/>
    <property type="resolution" value="2.19 A"/>
    <property type="chains" value="H/V=44-277"/>
</dbReference>
<dbReference type="PDB" id="5LF0">
    <property type="method" value="X-ray"/>
    <property type="resolution" value="2.41 A"/>
    <property type="chains" value="H/V=44-277"/>
</dbReference>
<dbReference type="PDB" id="5LF1">
    <property type="method" value="X-ray"/>
    <property type="resolution" value="2.00 A"/>
    <property type="chains" value="H/V=44-277"/>
</dbReference>
<dbReference type="PDB" id="5LF3">
    <property type="method" value="X-ray"/>
    <property type="resolution" value="2.10 A"/>
    <property type="chains" value="H/V=44-277"/>
</dbReference>
<dbReference type="PDB" id="5LF4">
    <property type="method" value="X-ray"/>
    <property type="resolution" value="1.99 A"/>
    <property type="chains" value="H/V=44-277"/>
</dbReference>
<dbReference type="PDB" id="5LF6">
    <property type="method" value="X-ray"/>
    <property type="resolution" value="2.07 A"/>
    <property type="chains" value="H/V=44-277"/>
</dbReference>
<dbReference type="PDB" id="5LF7">
    <property type="method" value="X-ray"/>
    <property type="resolution" value="2.00 A"/>
    <property type="chains" value="H/V=44-277"/>
</dbReference>
<dbReference type="PDB" id="5LN3">
    <property type="method" value="EM"/>
    <property type="resolution" value="6.80 A"/>
    <property type="chains" value="2=1-277"/>
</dbReference>
<dbReference type="PDB" id="5M32">
    <property type="method" value="EM"/>
    <property type="resolution" value="3.80 A"/>
    <property type="chains" value="H/V=1-277"/>
</dbReference>
<dbReference type="PDB" id="5T0C">
    <property type="method" value="EM"/>
    <property type="resolution" value="3.80 A"/>
    <property type="chains" value="AO/BO=2-277"/>
</dbReference>
<dbReference type="PDB" id="5T0G">
    <property type="method" value="EM"/>
    <property type="resolution" value="4.40 A"/>
    <property type="chains" value="O=2-277"/>
</dbReference>
<dbReference type="PDB" id="5T0H">
    <property type="method" value="EM"/>
    <property type="resolution" value="6.80 A"/>
    <property type="chains" value="O=2-277"/>
</dbReference>
<dbReference type="PDB" id="5T0I">
    <property type="method" value="EM"/>
    <property type="resolution" value="8.00 A"/>
    <property type="chains" value="O=2-277"/>
</dbReference>
<dbReference type="PDB" id="5T0J">
    <property type="method" value="EM"/>
    <property type="resolution" value="8.00 A"/>
    <property type="chains" value="O=2-277"/>
</dbReference>
<dbReference type="PDB" id="5VFO">
    <property type="method" value="EM"/>
    <property type="resolution" value="3.50 A"/>
    <property type="chains" value="O/o=44-263"/>
</dbReference>
<dbReference type="PDB" id="5VFP">
    <property type="method" value="EM"/>
    <property type="resolution" value="4.20 A"/>
    <property type="chains" value="O/o=44-263"/>
</dbReference>
<dbReference type="PDB" id="5VFQ">
    <property type="method" value="EM"/>
    <property type="resolution" value="4.20 A"/>
    <property type="chains" value="O/o=44-263"/>
</dbReference>
<dbReference type="PDB" id="5VFR">
    <property type="method" value="EM"/>
    <property type="resolution" value="4.90 A"/>
    <property type="chains" value="O/o=44-263"/>
</dbReference>
<dbReference type="PDB" id="5VFS">
    <property type="method" value="EM"/>
    <property type="resolution" value="3.60 A"/>
    <property type="chains" value="O/o=44-263"/>
</dbReference>
<dbReference type="PDB" id="5VFT">
    <property type="method" value="EM"/>
    <property type="resolution" value="7.00 A"/>
    <property type="chains" value="O/o=44-263"/>
</dbReference>
<dbReference type="PDB" id="5VFU">
    <property type="method" value="EM"/>
    <property type="resolution" value="5.80 A"/>
    <property type="chains" value="O/o=44-263"/>
</dbReference>
<dbReference type="PDB" id="6HTB">
    <property type="method" value="X-ray"/>
    <property type="resolution" value="2.70 A"/>
    <property type="chains" value="H/V=44-277"/>
</dbReference>
<dbReference type="PDB" id="6HTC">
    <property type="method" value="X-ray"/>
    <property type="resolution" value="2.80 A"/>
    <property type="chains" value="H/V=44-277"/>
</dbReference>
<dbReference type="PDB" id="6HTD">
    <property type="method" value="X-ray"/>
    <property type="resolution" value="3.00 A"/>
    <property type="chains" value="H/V=44-277"/>
</dbReference>
<dbReference type="PDB" id="6HTP">
    <property type="method" value="X-ray"/>
    <property type="resolution" value="3.00 A"/>
    <property type="chains" value="H/V=44-277"/>
</dbReference>
<dbReference type="PDB" id="6HTR">
    <property type="method" value="X-ray"/>
    <property type="resolution" value="2.60 A"/>
    <property type="chains" value="H/V=44-277"/>
</dbReference>
<dbReference type="PDB" id="6HUB">
    <property type="method" value="X-ray"/>
    <property type="resolution" value="2.90 A"/>
    <property type="chains" value="H/V=44-277"/>
</dbReference>
<dbReference type="PDB" id="6HUC">
    <property type="method" value="X-ray"/>
    <property type="resolution" value="3.00 A"/>
    <property type="chains" value="H/V=44-277"/>
</dbReference>
<dbReference type="PDB" id="6HUQ">
    <property type="method" value="X-ray"/>
    <property type="resolution" value="3.00 A"/>
    <property type="chains" value="H/V=44-277"/>
</dbReference>
<dbReference type="PDB" id="6HUU">
    <property type="method" value="X-ray"/>
    <property type="resolution" value="2.80 A"/>
    <property type="chains" value="H/V=44-277"/>
</dbReference>
<dbReference type="PDB" id="6HUV">
    <property type="method" value="X-ray"/>
    <property type="resolution" value="3.10 A"/>
    <property type="chains" value="H/V=44-277"/>
</dbReference>
<dbReference type="PDB" id="6KWY">
    <property type="method" value="EM"/>
    <property type="resolution" value="2.72 A"/>
    <property type="chains" value="H/V=1-277"/>
</dbReference>
<dbReference type="PDB" id="6MSB">
    <property type="method" value="EM"/>
    <property type="resolution" value="3.00 A"/>
    <property type="chains" value="O/o=2-277"/>
</dbReference>
<dbReference type="PDB" id="6MSD">
    <property type="method" value="EM"/>
    <property type="resolution" value="3.20 A"/>
    <property type="chains" value="O/o=2-277"/>
</dbReference>
<dbReference type="PDB" id="6MSE">
    <property type="method" value="EM"/>
    <property type="resolution" value="3.30 A"/>
    <property type="chains" value="O/o=2-277"/>
</dbReference>
<dbReference type="PDB" id="6MSG">
    <property type="method" value="EM"/>
    <property type="resolution" value="3.50 A"/>
    <property type="chains" value="O/o=2-277"/>
</dbReference>
<dbReference type="PDB" id="6MSH">
    <property type="method" value="EM"/>
    <property type="resolution" value="3.60 A"/>
    <property type="chains" value="O/o=2-277"/>
</dbReference>
<dbReference type="PDB" id="6MSJ">
    <property type="method" value="EM"/>
    <property type="resolution" value="3.30 A"/>
    <property type="chains" value="O/o=2-277"/>
</dbReference>
<dbReference type="PDB" id="6MSK">
    <property type="method" value="EM"/>
    <property type="resolution" value="3.20 A"/>
    <property type="chains" value="O/o=2-277"/>
</dbReference>
<dbReference type="PDB" id="6R70">
    <property type="method" value="EM"/>
    <property type="resolution" value="3.50 A"/>
    <property type="chains" value="H/V=44-263"/>
</dbReference>
<dbReference type="PDB" id="6REY">
    <property type="method" value="EM"/>
    <property type="resolution" value="3.00 A"/>
    <property type="chains" value="I/W=44-277"/>
</dbReference>
<dbReference type="PDB" id="6RGQ">
    <property type="method" value="EM"/>
    <property type="resolution" value="2.60 A"/>
    <property type="chains" value="I/W=44-277"/>
</dbReference>
<dbReference type="PDB" id="6WJD">
    <property type="method" value="EM"/>
    <property type="resolution" value="4.80 A"/>
    <property type="chains" value="O/o=2-277"/>
</dbReference>
<dbReference type="PDB" id="6WJN">
    <property type="method" value="EM"/>
    <property type="resolution" value="5.70 A"/>
    <property type="chains" value="O/o=44-263"/>
</dbReference>
<dbReference type="PDB" id="6XMJ">
    <property type="method" value="EM"/>
    <property type="resolution" value="3.00 A"/>
    <property type="chains" value="I=44-263"/>
</dbReference>
<dbReference type="PDB" id="7LXV">
    <property type="method" value="EM"/>
    <property type="resolution" value="3.40 A"/>
    <property type="chains" value="H/V=44-277"/>
</dbReference>
<dbReference type="PDB" id="7NAN">
    <property type="method" value="EM"/>
    <property type="resolution" value="2.80 A"/>
    <property type="chains" value="H/V=1-277"/>
</dbReference>
<dbReference type="PDB" id="7NAO">
    <property type="method" value="EM"/>
    <property type="resolution" value="2.90 A"/>
    <property type="chains" value="H/V=1-277"/>
</dbReference>
<dbReference type="PDB" id="7NAP">
    <property type="method" value="EM"/>
    <property type="resolution" value="3.20 A"/>
    <property type="chains" value="H/V=1-277"/>
</dbReference>
<dbReference type="PDB" id="7NAQ">
    <property type="method" value="EM"/>
    <property type="resolution" value="3.20 A"/>
    <property type="chains" value="H/V=1-277"/>
</dbReference>
<dbReference type="PDB" id="7NHT">
    <property type="method" value="EM"/>
    <property type="resolution" value="2.80 A"/>
    <property type="chains" value="H=1-277"/>
</dbReference>
<dbReference type="PDB" id="7PG9">
    <property type="method" value="EM"/>
    <property type="resolution" value="3.70 A"/>
    <property type="chains" value="I/W=44-277"/>
</dbReference>
<dbReference type="PDB" id="7QXN">
    <property type="method" value="EM"/>
    <property type="resolution" value="3.70 A"/>
    <property type="chains" value="O/o=2-277"/>
</dbReference>
<dbReference type="PDB" id="7QXP">
    <property type="method" value="EM"/>
    <property type="resolution" value="3.60 A"/>
    <property type="chains" value="O/o=2-277"/>
</dbReference>
<dbReference type="PDB" id="7QXU">
    <property type="method" value="EM"/>
    <property type="resolution" value="4.30 A"/>
    <property type="chains" value="O/o=2-277"/>
</dbReference>
<dbReference type="PDB" id="7QXW">
    <property type="method" value="EM"/>
    <property type="resolution" value="4.10 A"/>
    <property type="chains" value="O/o=2-277"/>
</dbReference>
<dbReference type="PDB" id="7QXX">
    <property type="method" value="EM"/>
    <property type="resolution" value="4.40 A"/>
    <property type="chains" value="O/o=2-277"/>
</dbReference>
<dbReference type="PDB" id="7QY7">
    <property type="method" value="EM"/>
    <property type="resolution" value="4.70 A"/>
    <property type="chains" value="O/o=2-277"/>
</dbReference>
<dbReference type="PDB" id="7QYA">
    <property type="method" value="EM"/>
    <property type="resolution" value="4.80 A"/>
    <property type="chains" value="O/o=2-277"/>
</dbReference>
<dbReference type="PDB" id="7QYB">
    <property type="method" value="EM"/>
    <property type="resolution" value="4.10 A"/>
    <property type="chains" value="O/o=2-277"/>
</dbReference>
<dbReference type="PDB" id="7V5G">
    <property type="method" value="EM"/>
    <property type="resolution" value="4.47 A"/>
    <property type="chains" value="B/I=44-277"/>
</dbReference>
<dbReference type="PDB" id="7V5M">
    <property type="method" value="EM"/>
    <property type="resolution" value="3.88 A"/>
    <property type="chains" value="I/W=44-277"/>
</dbReference>
<dbReference type="PDB" id="7W37">
    <property type="method" value="EM"/>
    <property type="resolution" value="3.00 A"/>
    <property type="chains" value="O/o=1-277"/>
</dbReference>
<dbReference type="PDB" id="7W38">
    <property type="method" value="EM"/>
    <property type="resolution" value="3.10 A"/>
    <property type="chains" value="O/o=1-277"/>
</dbReference>
<dbReference type="PDB" id="7W39">
    <property type="method" value="EM"/>
    <property type="resolution" value="3.20 A"/>
    <property type="chains" value="O/o=1-277"/>
</dbReference>
<dbReference type="PDB" id="7W3A">
    <property type="method" value="EM"/>
    <property type="resolution" value="3.50 A"/>
    <property type="chains" value="O/o=1-277"/>
</dbReference>
<dbReference type="PDB" id="7W3B">
    <property type="method" value="EM"/>
    <property type="resolution" value="3.60 A"/>
    <property type="chains" value="O/o=1-277"/>
</dbReference>
<dbReference type="PDB" id="7W3C">
    <property type="method" value="EM"/>
    <property type="resolution" value="3.40 A"/>
    <property type="chains" value="O/o=1-277"/>
</dbReference>
<dbReference type="PDB" id="7W3F">
    <property type="method" value="EM"/>
    <property type="resolution" value="3.30 A"/>
    <property type="chains" value="O/o=1-277"/>
</dbReference>
<dbReference type="PDB" id="7W3G">
    <property type="method" value="EM"/>
    <property type="resolution" value="3.20 A"/>
    <property type="chains" value="O/o=1-277"/>
</dbReference>
<dbReference type="PDB" id="7W3H">
    <property type="method" value="EM"/>
    <property type="resolution" value="3.20 A"/>
    <property type="chains" value="O/o=1-277"/>
</dbReference>
<dbReference type="PDB" id="7W3I">
    <property type="method" value="EM"/>
    <property type="resolution" value="3.50 A"/>
    <property type="chains" value="O/o=1-277"/>
</dbReference>
<dbReference type="PDB" id="7W3J">
    <property type="method" value="EM"/>
    <property type="resolution" value="3.50 A"/>
    <property type="chains" value="O/o=1-277"/>
</dbReference>
<dbReference type="PDB" id="7W3K">
    <property type="method" value="EM"/>
    <property type="resolution" value="3.60 A"/>
    <property type="chains" value="O/o=1-277"/>
</dbReference>
<dbReference type="PDB" id="7W3M">
    <property type="method" value="EM"/>
    <property type="resolution" value="3.50 A"/>
    <property type="chains" value="O/o=1-277"/>
</dbReference>
<dbReference type="PDB" id="8BZL">
    <property type="method" value="X-ray"/>
    <property type="resolution" value="2.14 A"/>
    <property type="chains" value="H/V=1-277"/>
</dbReference>
<dbReference type="PDB" id="8CVR">
    <property type="method" value="EM"/>
    <property type="resolution" value="2.70 A"/>
    <property type="chains" value="I/W=44-277"/>
</dbReference>
<dbReference type="PDB" id="8CVS">
    <property type="method" value="EM"/>
    <property type="resolution" value="3.10 A"/>
    <property type="chains" value="H/V=44-277"/>
</dbReference>
<dbReference type="PDB" id="8CVT">
    <property type="method" value="EM"/>
    <property type="resolution" value="3.00 A"/>
    <property type="chains" value="O/o=1-277"/>
</dbReference>
<dbReference type="PDB" id="8CXB">
    <property type="method" value="EM"/>
    <property type="resolution" value="2.90 A"/>
    <property type="chains" value="H/V=1-277"/>
</dbReference>
<dbReference type="PDB" id="8QYJ">
    <property type="method" value="EM"/>
    <property type="resolution" value="2.73 A"/>
    <property type="chains" value="K=1-277"/>
</dbReference>
<dbReference type="PDB" id="8QYL">
    <property type="method" value="EM"/>
    <property type="resolution" value="2.67 A"/>
    <property type="chains" value="K=1-277"/>
</dbReference>
<dbReference type="PDB" id="8QYM">
    <property type="method" value="EM"/>
    <property type="resolution" value="2.73 A"/>
    <property type="chains" value="K=1-277"/>
</dbReference>
<dbReference type="PDB" id="8QYN">
    <property type="method" value="EM"/>
    <property type="resolution" value="2.88 A"/>
    <property type="chains" value="K=1-277"/>
</dbReference>
<dbReference type="PDB" id="8QYO">
    <property type="method" value="EM"/>
    <property type="resolution" value="2.84 A"/>
    <property type="chains" value="H/V=1-277"/>
</dbReference>
<dbReference type="PDB" id="8QYS">
    <property type="method" value="EM"/>
    <property type="resolution" value="3.89 A"/>
    <property type="chains" value="K/b=2-263"/>
</dbReference>
<dbReference type="PDB" id="8QZ9">
    <property type="method" value="EM"/>
    <property type="resolution" value="2.95 A"/>
    <property type="chains" value="K=1-277"/>
</dbReference>
<dbReference type="PDB" id="8TM4">
    <property type="method" value="EM"/>
    <property type="resolution" value="3.00 A"/>
    <property type="chains" value="H=1-277"/>
</dbReference>
<dbReference type="PDB" id="8TM5">
    <property type="method" value="EM"/>
    <property type="resolution" value="3.00 A"/>
    <property type="chains" value="H=1-277"/>
</dbReference>
<dbReference type="PDB" id="8TM6">
    <property type="method" value="EM"/>
    <property type="resolution" value="2.80 A"/>
    <property type="chains" value="H/V=1-277"/>
</dbReference>
<dbReference type="PDB" id="8UD9">
    <property type="method" value="EM"/>
    <property type="resolution" value="2.04 A"/>
    <property type="chains" value="I/W=44-277"/>
</dbReference>
<dbReference type="PDB" id="8USB">
    <property type="method" value="EM"/>
    <property type="resolution" value="2.73 A"/>
    <property type="chains" value="O=1-277"/>
</dbReference>
<dbReference type="PDB" id="8USC">
    <property type="method" value="EM"/>
    <property type="resolution" value="3.10 A"/>
    <property type="chains" value="O=1-277"/>
</dbReference>
<dbReference type="PDB" id="8YIX">
    <property type="method" value="EM"/>
    <property type="resolution" value="2.91 A"/>
    <property type="chains" value="H=1-277"/>
</dbReference>
<dbReference type="PDB" id="8YIY">
    <property type="method" value="EM"/>
    <property type="resolution" value="3.41 A"/>
    <property type="chains" value="H/V=1-277"/>
</dbReference>
<dbReference type="PDB" id="8YIZ">
    <property type="method" value="EM"/>
    <property type="resolution" value="3.79 A"/>
    <property type="chains" value="H/V=1-277"/>
</dbReference>
<dbReference type="PDB" id="9E8G">
    <property type="method" value="EM"/>
    <property type="resolution" value="3.01 A"/>
    <property type="chains" value="P=1-277"/>
</dbReference>
<dbReference type="PDB" id="9E8K">
    <property type="method" value="EM"/>
    <property type="resolution" value="4.08 A"/>
    <property type="chains" value="O=1-277"/>
</dbReference>
<dbReference type="PDB" id="9E8N">
    <property type="method" value="EM"/>
    <property type="resolution" value="3.62 A"/>
    <property type="chains" value="O=1-277"/>
</dbReference>
<dbReference type="PDB" id="9E8O">
    <property type="method" value="EM"/>
    <property type="resolution" value="3.10 A"/>
    <property type="chains" value="O=1-277"/>
</dbReference>
<dbReference type="PDB" id="9E8Q">
    <property type="method" value="EM"/>
    <property type="resolution" value="3.16 A"/>
    <property type="chains" value="O=1-277"/>
</dbReference>
<dbReference type="PDB" id="9HMN">
    <property type="method" value="EM"/>
    <property type="resolution" value="2.55 A"/>
    <property type="chains" value="I/a=44-277"/>
</dbReference>
<dbReference type="PDBsum" id="4R3O"/>
<dbReference type="PDBsum" id="4R67"/>
<dbReference type="PDBsum" id="5A0Q"/>
<dbReference type="PDBsum" id="5GJQ"/>
<dbReference type="PDBsum" id="5GJR"/>
<dbReference type="PDBsum" id="5L4G"/>
<dbReference type="PDBsum" id="5LE5"/>
<dbReference type="PDBsum" id="5LEX"/>
<dbReference type="PDBsum" id="5LEY"/>
<dbReference type="PDBsum" id="5LEZ"/>
<dbReference type="PDBsum" id="5LF0"/>
<dbReference type="PDBsum" id="5LF1"/>
<dbReference type="PDBsum" id="5LF3"/>
<dbReference type="PDBsum" id="5LF4"/>
<dbReference type="PDBsum" id="5LF6"/>
<dbReference type="PDBsum" id="5LF7"/>
<dbReference type="PDBsum" id="5LN3"/>
<dbReference type="PDBsum" id="5M32"/>
<dbReference type="PDBsum" id="5T0C"/>
<dbReference type="PDBsum" id="5T0G"/>
<dbReference type="PDBsum" id="5T0H"/>
<dbReference type="PDBsum" id="5T0I"/>
<dbReference type="PDBsum" id="5T0J"/>
<dbReference type="PDBsum" id="5VFO"/>
<dbReference type="PDBsum" id="5VFP"/>
<dbReference type="PDBsum" id="5VFQ"/>
<dbReference type="PDBsum" id="5VFR"/>
<dbReference type="PDBsum" id="5VFS"/>
<dbReference type="PDBsum" id="5VFT"/>
<dbReference type="PDBsum" id="5VFU"/>
<dbReference type="PDBsum" id="6HTB"/>
<dbReference type="PDBsum" id="6HTC"/>
<dbReference type="PDBsum" id="6HTD"/>
<dbReference type="PDBsum" id="6HTP"/>
<dbReference type="PDBsum" id="6HTR"/>
<dbReference type="PDBsum" id="6HUB"/>
<dbReference type="PDBsum" id="6HUC"/>
<dbReference type="PDBsum" id="6HUQ"/>
<dbReference type="PDBsum" id="6HUU"/>
<dbReference type="PDBsum" id="6HUV"/>
<dbReference type="PDBsum" id="6KWY"/>
<dbReference type="PDBsum" id="6MSB"/>
<dbReference type="PDBsum" id="6MSD"/>
<dbReference type="PDBsum" id="6MSE"/>
<dbReference type="PDBsum" id="6MSG"/>
<dbReference type="PDBsum" id="6MSH"/>
<dbReference type="PDBsum" id="6MSJ"/>
<dbReference type="PDBsum" id="6MSK"/>
<dbReference type="PDBsum" id="6R70"/>
<dbReference type="PDBsum" id="6REY"/>
<dbReference type="PDBsum" id="6RGQ"/>
<dbReference type="PDBsum" id="6WJD"/>
<dbReference type="PDBsum" id="6WJN"/>
<dbReference type="PDBsum" id="6XMJ"/>
<dbReference type="PDBsum" id="7LXV"/>
<dbReference type="PDBsum" id="7NAN"/>
<dbReference type="PDBsum" id="7NAO"/>
<dbReference type="PDBsum" id="7NAP"/>
<dbReference type="PDBsum" id="7NAQ"/>
<dbReference type="PDBsum" id="7NHT"/>
<dbReference type="PDBsum" id="7PG9"/>
<dbReference type="PDBsum" id="7QXN"/>
<dbReference type="PDBsum" id="7QXP"/>
<dbReference type="PDBsum" id="7QXU"/>
<dbReference type="PDBsum" id="7QXW"/>
<dbReference type="PDBsum" id="7QXX"/>
<dbReference type="PDBsum" id="7QY7"/>
<dbReference type="PDBsum" id="7QYA"/>
<dbReference type="PDBsum" id="7QYB"/>
<dbReference type="PDBsum" id="7V5G"/>
<dbReference type="PDBsum" id="7V5M"/>
<dbReference type="PDBsum" id="7W37"/>
<dbReference type="PDBsum" id="7W38"/>
<dbReference type="PDBsum" id="7W39"/>
<dbReference type="PDBsum" id="7W3A"/>
<dbReference type="PDBsum" id="7W3B"/>
<dbReference type="PDBsum" id="7W3C"/>
<dbReference type="PDBsum" id="7W3F"/>
<dbReference type="PDBsum" id="7W3G"/>
<dbReference type="PDBsum" id="7W3H"/>
<dbReference type="PDBsum" id="7W3I"/>
<dbReference type="PDBsum" id="7W3J"/>
<dbReference type="PDBsum" id="7W3K"/>
<dbReference type="PDBsum" id="7W3M"/>
<dbReference type="PDBsum" id="8BZL"/>
<dbReference type="PDBsum" id="8CVR"/>
<dbReference type="PDBsum" id="8CVS"/>
<dbReference type="PDBsum" id="8CVT"/>
<dbReference type="PDBsum" id="8CXB"/>
<dbReference type="PDBsum" id="8QYJ"/>
<dbReference type="PDBsum" id="8QYL"/>
<dbReference type="PDBsum" id="8QYM"/>
<dbReference type="PDBsum" id="8QYN"/>
<dbReference type="PDBsum" id="8QYO"/>
<dbReference type="PDBsum" id="8QYS"/>
<dbReference type="PDBsum" id="8QZ9"/>
<dbReference type="PDBsum" id="8TM4"/>
<dbReference type="PDBsum" id="8TM5"/>
<dbReference type="PDBsum" id="8TM6"/>
<dbReference type="PDBsum" id="8UD9"/>
<dbReference type="PDBsum" id="8USB"/>
<dbReference type="PDBsum" id="8USC"/>
<dbReference type="PDBsum" id="8YIX"/>
<dbReference type="PDBsum" id="8YIY"/>
<dbReference type="PDBsum" id="8YIZ"/>
<dbReference type="PDBsum" id="9E8G"/>
<dbReference type="PDBsum" id="9E8K"/>
<dbReference type="PDBsum" id="9E8N"/>
<dbReference type="PDBsum" id="9E8O"/>
<dbReference type="PDBsum" id="9E8Q"/>
<dbReference type="PDBsum" id="9HMN"/>
<dbReference type="EMDB" id="EMD-0781"/>
<dbReference type="EMDB" id="EMD-12341"/>
<dbReference type="EMDB" id="EMD-13389"/>
<dbReference type="EMDB" id="EMD-14201"/>
<dbReference type="EMDB" id="EMD-14202"/>
<dbReference type="EMDB" id="EMD-14203"/>
<dbReference type="EMDB" id="EMD-14204"/>
<dbReference type="EMDB" id="EMD-14205"/>
<dbReference type="EMDB" id="EMD-14209"/>
<dbReference type="EMDB" id="EMD-14210"/>
<dbReference type="EMDB" id="EMD-14211"/>
<dbReference type="EMDB" id="EMD-18755"/>
<dbReference type="EMDB" id="EMD-18757"/>
<dbReference type="EMDB" id="EMD-18758"/>
<dbReference type="EMDB" id="EMD-18759"/>
<dbReference type="EMDB" id="EMD-18760"/>
<dbReference type="EMDB" id="EMD-18761"/>
<dbReference type="EMDB" id="EMD-18773"/>
<dbReference type="EMDB" id="EMD-21691"/>
<dbReference type="EMDB" id="EMD-21696"/>
<dbReference type="EMDB" id="EMD-22259"/>
<dbReference type="EMDB" id="EMD-23576"/>
<dbReference type="EMDB" id="EMD-24275"/>
<dbReference type="EMDB" id="EMD-24276"/>
<dbReference type="EMDB" id="EMD-24277"/>
<dbReference type="EMDB" id="EMD-24278"/>
<dbReference type="EMDB" id="EMD-27013"/>
<dbReference type="EMDB" id="EMD-27015"/>
<dbReference type="EMDB" id="EMD-27018"/>
<dbReference type="EMDB" id="EMD-2981"/>
<dbReference type="EMDB" id="EMD-31724"/>
<dbReference type="EMDB" id="EMD-31727"/>
<dbReference type="EMDB" id="EMD-32272"/>
<dbReference type="EMDB" id="EMD-32273"/>
<dbReference type="EMDB" id="EMD-32274"/>
<dbReference type="EMDB" id="EMD-32275"/>
<dbReference type="EMDB" id="EMD-32276"/>
<dbReference type="EMDB" id="EMD-32277"/>
<dbReference type="EMDB" id="EMD-32278"/>
<dbReference type="EMDB" id="EMD-32279"/>
<dbReference type="EMDB" id="EMD-32280"/>
<dbReference type="EMDB" id="EMD-32281"/>
<dbReference type="EMDB" id="EMD-32282"/>
<dbReference type="EMDB" id="EMD-32283"/>
<dbReference type="EMDB" id="EMD-32284"/>
<dbReference type="EMDB" id="EMD-39332"/>
<dbReference type="EMDB" id="EMD-39333"/>
<dbReference type="EMDB" id="EMD-39334"/>
<dbReference type="EMDB" id="EMD-4089"/>
<dbReference type="EMDB" id="EMD-41378"/>
<dbReference type="EMDB" id="EMD-41379"/>
<dbReference type="EMDB" id="EMD-41380"/>
<dbReference type="EMDB" id="EMD-42148"/>
<dbReference type="EMDB" id="EMD-42506"/>
<dbReference type="EMDB" id="EMD-42507"/>
<dbReference type="EMDB" id="EMD-4738"/>
<dbReference type="EMDB" id="EMD-47719"/>
<dbReference type="EMDB" id="EMD-47723"/>
<dbReference type="EMDB" id="EMD-47725"/>
<dbReference type="EMDB" id="EMD-47726"/>
<dbReference type="EMDB" id="EMD-47727"/>
<dbReference type="EMDB" id="EMD-4860"/>
<dbReference type="EMDB" id="EMD-4877"/>
<dbReference type="EMDB" id="EMD-52296"/>
<dbReference type="EMDB" id="EMD-60138"/>
<dbReference type="EMDB" id="EMD-8662"/>
<dbReference type="EMDB" id="EMD-8663"/>
<dbReference type="EMDB" id="EMD-8664"/>
<dbReference type="EMDB" id="EMD-8665"/>
<dbReference type="EMDB" id="EMD-8666"/>
<dbReference type="EMDB" id="EMD-8667"/>
<dbReference type="EMDB" id="EMD-8668"/>
<dbReference type="EMDB" id="EMD-9216"/>
<dbReference type="EMDB" id="EMD-9217"/>
<dbReference type="EMDB" id="EMD-9218"/>
<dbReference type="EMDB" id="EMD-9219"/>
<dbReference type="EMDB" id="EMD-9220"/>
<dbReference type="EMDB" id="EMD-9221"/>
<dbReference type="EMDB" id="EMD-9222"/>
<dbReference type="EMDB" id="EMD-9512"/>
<dbReference type="SMR" id="Q99436"/>
<dbReference type="BioGRID" id="111668">
    <property type="interactions" value="220"/>
</dbReference>
<dbReference type="ComplexPortal" id="CPX-5993">
    <property type="entry name" value="26S proteasome complex"/>
</dbReference>
<dbReference type="ComplexPortal" id="CPX-8806">
    <property type="entry name" value="20S proteasome complex"/>
</dbReference>
<dbReference type="ComplexPortal" id="CPX-8841">
    <property type="entry name" value="PA200-20S single-capped proteasome"/>
</dbReference>
<dbReference type="ComplexPortal" id="CPX-8842">
    <property type="entry name" value="PA28-alphabeta double-capped 20S proteasome complex"/>
</dbReference>
<dbReference type="ComplexPortal" id="CPX-9001">
    <property type="entry name" value="PA28-gamma single-capped 20S proteasome complex"/>
</dbReference>
<dbReference type="ComplexPortal" id="CPX-9002">
    <property type="entry name" value="PA28-alphabeta single-capped 20S proteasome complex"/>
</dbReference>
<dbReference type="ComplexPortal" id="CPX-9021">
    <property type="entry name" value="20S spermatoproteasome complex"/>
</dbReference>
<dbReference type="ComplexPortal" id="CPX-9022">
    <property type="entry name" value="PA28-gamma double-capped 20S proteasome complex"/>
</dbReference>
<dbReference type="ComplexPortal" id="CPX-9063">
    <property type="entry name" value="PA200-20S-PA200 double-capped proteasome complex"/>
</dbReference>
<dbReference type="ComplexPortal" id="CPX-9082">
    <property type="entry name" value="19S-20S-PA28-alphabeta hybrid proteasome complex"/>
</dbReference>
<dbReference type="ComplexPortal" id="CPX-9085">
    <property type="entry name" value="19S-20S-PA28-gamma hybrid proteasome complex"/>
</dbReference>
<dbReference type="ComplexPortal" id="CPX-9086">
    <property type="entry name" value="30S proteasome complex"/>
</dbReference>
<dbReference type="CORUM" id="Q99436"/>
<dbReference type="DIP" id="DIP-33843N"/>
<dbReference type="FunCoup" id="Q99436">
    <property type="interactions" value="2413"/>
</dbReference>
<dbReference type="IntAct" id="Q99436">
    <property type="interactions" value="82"/>
</dbReference>
<dbReference type="MINT" id="Q99436"/>
<dbReference type="STRING" id="9606.ENSP00000259457"/>
<dbReference type="BindingDB" id="Q99436"/>
<dbReference type="ChEMBL" id="CHEMBL3347256"/>
<dbReference type="DrugBank" id="DB08515">
    <property type="generic name" value="(3AR,6R,6AS)-6-((S)-((S)-CYCLOHEX-2-ENYL)(HYDROXY)METHYL)-6A-METHYL-4-OXO-HEXAHYDRO-2H-FURO[3,2-C]PYRROLE-6-CARBALDEHYDE"/>
</dbReference>
<dbReference type="MEROPS" id="T01.011"/>
<dbReference type="MEROPS" id="T01.017"/>
<dbReference type="GlyGen" id="Q99436">
    <property type="glycosylation" value="1 site, 1 O-linked glycan (1 site)"/>
</dbReference>
<dbReference type="iPTMnet" id="Q99436"/>
<dbReference type="MetOSite" id="Q99436"/>
<dbReference type="PhosphoSitePlus" id="Q99436"/>
<dbReference type="SwissPalm" id="Q99436"/>
<dbReference type="BioMuta" id="PSMB7"/>
<dbReference type="DMDM" id="17380263"/>
<dbReference type="jPOST" id="Q99436"/>
<dbReference type="MassIVE" id="Q99436"/>
<dbReference type="PaxDb" id="9606-ENSP00000259457"/>
<dbReference type="PeptideAtlas" id="Q99436"/>
<dbReference type="ProteomicsDB" id="5686"/>
<dbReference type="ProteomicsDB" id="78266">
    <molecule id="Q99436-1"/>
</dbReference>
<dbReference type="Pumba" id="Q99436"/>
<dbReference type="Antibodypedia" id="30460">
    <property type="antibodies" value="328 antibodies from 32 providers"/>
</dbReference>
<dbReference type="DNASU" id="5695"/>
<dbReference type="Ensembl" id="ENST00000259457.8">
    <molecule id="Q99436-1"/>
    <property type="protein sequence ID" value="ENSP00000259457.3"/>
    <property type="gene ID" value="ENSG00000136930.13"/>
</dbReference>
<dbReference type="GeneID" id="5695"/>
<dbReference type="KEGG" id="hsa:5695"/>
<dbReference type="MANE-Select" id="ENST00000259457.8">
    <property type="protein sequence ID" value="ENSP00000259457.3"/>
    <property type="RefSeq nucleotide sequence ID" value="NM_002799.4"/>
    <property type="RefSeq protein sequence ID" value="NP_002790.1"/>
</dbReference>
<dbReference type="UCSC" id="uc004boj.5">
    <molecule id="Q99436-1"/>
    <property type="organism name" value="human"/>
</dbReference>
<dbReference type="AGR" id="HGNC:9544"/>
<dbReference type="CTD" id="5695"/>
<dbReference type="DisGeNET" id="5695"/>
<dbReference type="GeneCards" id="PSMB7"/>
<dbReference type="HGNC" id="HGNC:9544">
    <property type="gene designation" value="PSMB7"/>
</dbReference>
<dbReference type="HPA" id="ENSG00000136930">
    <property type="expression patterns" value="Low tissue specificity"/>
</dbReference>
<dbReference type="MIM" id="604030">
    <property type="type" value="gene"/>
</dbReference>
<dbReference type="neXtProt" id="NX_Q99436"/>
<dbReference type="OpenTargets" id="ENSG00000136930"/>
<dbReference type="PharmGKB" id="PA33889"/>
<dbReference type="VEuPathDB" id="HostDB:ENSG00000136930"/>
<dbReference type="eggNOG" id="KOG0173">
    <property type="taxonomic scope" value="Eukaryota"/>
</dbReference>
<dbReference type="GeneTree" id="ENSGT00940000157419"/>
<dbReference type="HOGENOM" id="CLU_035750_3_0_1"/>
<dbReference type="InParanoid" id="Q99436"/>
<dbReference type="OMA" id="KQHLFRH"/>
<dbReference type="OrthoDB" id="429533at2759"/>
<dbReference type="PAN-GO" id="Q99436">
    <property type="GO annotations" value="5 GO annotations based on evolutionary models"/>
</dbReference>
<dbReference type="PhylomeDB" id="Q99436"/>
<dbReference type="TreeFam" id="TF106222"/>
<dbReference type="PathwayCommons" id="Q99436"/>
<dbReference type="Reactome" id="R-HSA-1169091">
    <property type="pathway name" value="Activation of NF-kappaB in B cells"/>
</dbReference>
<dbReference type="Reactome" id="R-HSA-1234176">
    <property type="pathway name" value="Oxygen-dependent proline hydroxylation of Hypoxia-inducible Factor Alpha"/>
</dbReference>
<dbReference type="Reactome" id="R-HSA-1236974">
    <property type="pathway name" value="ER-Phagosome pathway"/>
</dbReference>
<dbReference type="Reactome" id="R-HSA-1236978">
    <property type="pathway name" value="Cross-presentation of soluble exogenous antigens (endosomes)"/>
</dbReference>
<dbReference type="Reactome" id="R-HSA-174084">
    <property type="pathway name" value="Autodegradation of Cdh1 by Cdh1:APC/C"/>
</dbReference>
<dbReference type="Reactome" id="R-HSA-174113">
    <property type="pathway name" value="SCF-beta-TrCP mediated degradation of Emi1"/>
</dbReference>
<dbReference type="Reactome" id="R-HSA-174154">
    <property type="pathway name" value="APC/C:Cdc20 mediated degradation of Securin"/>
</dbReference>
<dbReference type="Reactome" id="R-HSA-174178">
    <property type="pathway name" value="APC/C:Cdh1 mediated degradation of Cdc20 and other APC/C:Cdh1 targeted proteins in late mitosis/early G1"/>
</dbReference>
<dbReference type="Reactome" id="R-HSA-174184">
    <property type="pathway name" value="Cdc20:Phospho-APC/C mediated degradation of Cyclin A"/>
</dbReference>
<dbReference type="Reactome" id="R-HSA-180534">
    <property type="pathway name" value="Vpu mediated degradation of CD4"/>
</dbReference>
<dbReference type="Reactome" id="R-HSA-180585">
    <property type="pathway name" value="Vif-mediated degradation of APOBEC3G"/>
</dbReference>
<dbReference type="Reactome" id="R-HSA-187577">
    <property type="pathway name" value="SCF(Skp2)-mediated degradation of p27/p21"/>
</dbReference>
<dbReference type="Reactome" id="R-HSA-195253">
    <property type="pathway name" value="Degradation of beta-catenin by the destruction complex"/>
</dbReference>
<dbReference type="Reactome" id="R-HSA-202424">
    <property type="pathway name" value="Downstream TCR signaling"/>
</dbReference>
<dbReference type="Reactome" id="R-HSA-211733">
    <property type="pathway name" value="Regulation of activated PAK-2p34 by proteasome mediated degradation"/>
</dbReference>
<dbReference type="Reactome" id="R-HSA-2467813">
    <property type="pathway name" value="Separation of Sister Chromatids"/>
</dbReference>
<dbReference type="Reactome" id="R-HSA-2871837">
    <property type="pathway name" value="FCERI mediated NF-kB activation"/>
</dbReference>
<dbReference type="Reactome" id="R-HSA-349425">
    <property type="pathway name" value="Autodegradation of the E3 ubiquitin ligase COP1"/>
</dbReference>
<dbReference type="Reactome" id="R-HSA-350562">
    <property type="pathway name" value="Regulation of ornithine decarboxylase (ODC)"/>
</dbReference>
<dbReference type="Reactome" id="R-HSA-382556">
    <property type="pathway name" value="ABC-family proteins mediated transport"/>
</dbReference>
<dbReference type="Reactome" id="R-HSA-450408">
    <property type="pathway name" value="AUF1 (hnRNP D0) binds and destabilizes mRNA"/>
</dbReference>
<dbReference type="Reactome" id="R-HSA-4608870">
    <property type="pathway name" value="Asymmetric localization of PCP proteins"/>
</dbReference>
<dbReference type="Reactome" id="R-HSA-4641257">
    <property type="pathway name" value="Degradation of AXIN"/>
</dbReference>
<dbReference type="Reactome" id="R-HSA-4641258">
    <property type="pathway name" value="Degradation of DVL"/>
</dbReference>
<dbReference type="Reactome" id="R-HSA-5358346">
    <property type="pathway name" value="Hedgehog ligand biogenesis"/>
</dbReference>
<dbReference type="Reactome" id="R-HSA-5362768">
    <property type="pathway name" value="Hh mutants are degraded by ERAD"/>
</dbReference>
<dbReference type="Reactome" id="R-HSA-5607761">
    <property type="pathway name" value="Dectin-1 mediated noncanonical NF-kB signaling"/>
</dbReference>
<dbReference type="Reactome" id="R-HSA-5607764">
    <property type="pathway name" value="CLEC7A (Dectin-1) signaling"/>
</dbReference>
<dbReference type="Reactome" id="R-HSA-5610780">
    <property type="pathway name" value="Degradation of GLI1 by the proteasome"/>
</dbReference>
<dbReference type="Reactome" id="R-HSA-5610783">
    <property type="pathway name" value="Degradation of GLI2 by the proteasome"/>
</dbReference>
<dbReference type="Reactome" id="R-HSA-5610785">
    <property type="pathway name" value="GLI3 is processed to GLI3R by the proteasome"/>
</dbReference>
<dbReference type="Reactome" id="R-HSA-5632684">
    <property type="pathway name" value="Hedgehog 'on' state"/>
</dbReference>
<dbReference type="Reactome" id="R-HSA-5658442">
    <property type="pathway name" value="Regulation of RAS by GAPs"/>
</dbReference>
<dbReference type="Reactome" id="R-HSA-5668541">
    <property type="pathway name" value="TNFR2 non-canonical NF-kB pathway"/>
</dbReference>
<dbReference type="Reactome" id="R-HSA-5676590">
    <property type="pathway name" value="NIK--&gt;noncanonical NF-kB signaling"/>
</dbReference>
<dbReference type="Reactome" id="R-HSA-5678895">
    <property type="pathway name" value="Defective CFTR causes cystic fibrosis"/>
</dbReference>
<dbReference type="Reactome" id="R-HSA-5687128">
    <property type="pathway name" value="MAPK6/MAPK4 signaling"/>
</dbReference>
<dbReference type="Reactome" id="R-HSA-5689603">
    <property type="pathway name" value="UCH proteinases"/>
</dbReference>
<dbReference type="Reactome" id="R-HSA-5689880">
    <property type="pathway name" value="Ub-specific processing proteases"/>
</dbReference>
<dbReference type="Reactome" id="R-HSA-6798695">
    <property type="pathway name" value="Neutrophil degranulation"/>
</dbReference>
<dbReference type="Reactome" id="R-HSA-68867">
    <property type="pathway name" value="Assembly of the pre-replicative complex"/>
</dbReference>
<dbReference type="Reactome" id="R-HSA-68949">
    <property type="pathway name" value="Orc1 removal from chromatin"/>
</dbReference>
<dbReference type="Reactome" id="R-HSA-69017">
    <property type="pathway name" value="CDK-mediated phosphorylation and removal of Cdc6"/>
</dbReference>
<dbReference type="Reactome" id="R-HSA-69481">
    <property type="pathway name" value="G2/M Checkpoints"/>
</dbReference>
<dbReference type="Reactome" id="R-HSA-69601">
    <property type="pathway name" value="Ubiquitin Mediated Degradation of Phosphorylated Cdc25A"/>
</dbReference>
<dbReference type="Reactome" id="R-HSA-75815">
    <property type="pathway name" value="Ubiquitin-dependent degradation of Cyclin D"/>
</dbReference>
<dbReference type="Reactome" id="R-HSA-8852276">
    <property type="pathway name" value="The role of GTSE1 in G2/M progression after G2 checkpoint"/>
</dbReference>
<dbReference type="Reactome" id="R-HSA-8854050">
    <property type="pathway name" value="FBXL7 down-regulates AURKA during mitotic entry and in early mitosis"/>
</dbReference>
<dbReference type="Reactome" id="R-HSA-8939236">
    <property type="pathway name" value="RUNX1 regulates transcription of genes involved in differentiation of HSCs"/>
</dbReference>
<dbReference type="Reactome" id="R-HSA-8939902">
    <property type="pathway name" value="Regulation of RUNX2 expression and activity"/>
</dbReference>
<dbReference type="Reactome" id="R-HSA-8941858">
    <property type="pathway name" value="Regulation of RUNX3 expression and activity"/>
</dbReference>
<dbReference type="Reactome" id="R-HSA-8948751">
    <property type="pathway name" value="Regulation of PTEN stability and activity"/>
</dbReference>
<dbReference type="Reactome" id="R-HSA-8951664">
    <property type="pathway name" value="Neddylation"/>
</dbReference>
<dbReference type="Reactome" id="R-HSA-9010553">
    <property type="pathway name" value="Regulation of expression of SLITs and ROBOs"/>
</dbReference>
<dbReference type="Reactome" id="R-HSA-9020702">
    <property type="pathway name" value="Interleukin-1 signaling"/>
</dbReference>
<dbReference type="Reactome" id="R-HSA-9604323">
    <property type="pathway name" value="Negative regulation of NOTCH4 signaling"/>
</dbReference>
<dbReference type="Reactome" id="R-HSA-9755511">
    <property type="pathway name" value="KEAP1-NFE2L2 pathway"/>
</dbReference>
<dbReference type="Reactome" id="R-HSA-9762114">
    <property type="pathway name" value="GSK3B and BTRC:CUL1-mediated-degradation of NFE2L2"/>
</dbReference>
<dbReference type="Reactome" id="R-HSA-9824272">
    <property type="pathway name" value="Somitogenesis"/>
</dbReference>
<dbReference type="Reactome" id="R-HSA-983168">
    <property type="pathway name" value="Antigen processing: Ubiquitination &amp; Proteasome degradation"/>
</dbReference>
<dbReference type="Reactome" id="R-HSA-9907900">
    <property type="pathway name" value="Proteasome assembly"/>
</dbReference>
<dbReference type="SignaLink" id="Q99436"/>
<dbReference type="SIGNOR" id="Q99436"/>
<dbReference type="BioGRID-ORCS" id="5695">
    <property type="hits" value="817 hits in 1127 CRISPR screens"/>
</dbReference>
<dbReference type="ChiTaRS" id="PSMB7">
    <property type="organism name" value="human"/>
</dbReference>
<dbReference type="EvolutionaryTrace" id="Q99436"/>
<dbReference type="GeneWiki" id="PSMB7"/>
<dbReference type="GenomeRNAi" id="5695"/>
<dbReference type="Pharos" id="Q99436">
    <property type="development level" value="Tbio"/>
</dbReference>
<dbReference type="PRO" id="PR:Q99436"/>
<dbReference type="Proteomes" id="UP000005640">
    <property type="component" value="Chromosome 9"/>
</dbReference>
<dbReference type="RNAct" id="Q99436">
    <property type="molecule type" value="protein"/>
</dbReference>
<dbReference type="Bgee" id="ENSG00000136930">
    <property type="expression patterns" value="Expressed in ganglionic eminence and 206 other cell types or tissues"/>
</dbReference>
<dbReference type="ExpressionAtlas" id="Q99436">
    <property type="expression patterns" value="baseline and differential"/>
</dbReference>
<dbReference type="GO" id="GO:0005929">
    <property type="term" value="C:cilium"/>
    <property type="evidence" value="ECO:0000314"/>
    <property type="project" value="HPA"/>
</dbReference>
<dbReference type="GO" id="GO:0005737">
    <property type="term" value="C:cytoplasm"/>
    <property type="evidence" value="ECO:0000314"/>
    <property type="project" value="UniProtKB"/>
</dbReference>
<dbReference type="GO" id="GO:0005829">
    <property type="term" value="C:cytosol"/>
    <property type="evidence" value="ECO:0000314"/>
    <property type="project" value="HPA"/>
</dbReference>
<dbReference type="GO" id="GO:0005576">
    <property type="term" value="C:extracellular region"/>
    <property type="evidence" value="ECO:0000304"/>
    <property type="project" value="Reactome"/>
</dbReference>
<dbReference type="GO" id="GO:1904813">
    <property type="term" value="C:ficolin-1-rich granule lumen"/>
    <property type="evidence" value="ECO:0000304"/>
    <property type="project" value="Reactome"/>
</dbReference>
<dbReference type="GO" id="GO:0016604">
    <property type="term" value="C:nuclear body"/>
    <property type="evidence" value="ECO:0000314"/>
    <property type="project" value="HPA"/>
</dbReference>
<dbReference type="GO" id="GO:0005654">
    <property type="term" value="C:nucleoplasm"/>
    <property type="evidence" value="ECO:0000314"/>
    <property type="project" value="HPA"/>
</dbReference>
<dbReference type="GO" id="GO:0005634">
    <property type="term" value="C:nucleus"/>
    <property type="evidence" value="ECO:0000314"/>
    <property type="project" value="UniProtKB"/>
</dbReference>
<dbReference type="GO" id="GO:0000502">
    <property type="term" value="C:proteasome complex"/>
    <property type="evidence" value="ECO:0000314"/>
    <property type="project" value="UniProtKB"/>
</dbReference>
<dbReference type="GO" id="GO:0005839">
    <property type="term" value="C:proteasome core complex"/>
    <property type="evidence" value="ECO:0000314"/>
    <property type="project" value="UniProtKB"/>
</dbReference>
<dbReference type="GO" id="GO:0019774">
    <property type="term" value="C:proteasome core complex, beta-subunit complex"/>
    <property type="evidence" value="ECO:0000250"/>
    <property type="project" value="UniProtKB"/>
</dbReference>
<dbReference type="GO" id="GO:0034774">
    <property type="term" value="C:secretory granule lumen"/>
    <property type="evidence" value="ECO:0000304"/>
    <property type="project" value="Reactome"/>
</dbReference>
<dbReference type="GO" id="GO:0004175">
    <property type="term" value="F:endopeptidase activity"/>
    <property type="evidence" value="ECO:0000318"/>
    <property type="project" value="GO_Central"/>
</dbReference>
<dbReference type="GO" id="GO:0004298">
    <property type="term" value="F:threonine-type endopeptidase activity"/>
    <property type="evidence" value="ECO:0007669"/>
    <property type="project" value="UniProtKB-KW"/>
</dbReference>
<dbReference type="GO" id="GO:0043161">
    <property type="term" value="P:proteasome-mediated ubiquitin-dependent protein catabolic process"/>
    <property type="evidence" value="ECO:0000318"/>
    <property type="project" value="GO_Central"/>
</dbReference>
<dbReference type="CDD" id="cd03763">
    <property type="entry name" value="proteasome_beta_type_7"/>
    <property type="match status" value="1"/>
</dbReference>
<dbReference type="FunFam" id="3.60.20.10:FF:000005">
    <property type="entry name" value="Proteasome subunit beta type-2"/>
    <property type="match status" value="1"/>
</dbReference>
<dbReference type="Gene3D" id="3.60.20.10">
    <property type="entry name" value="Glutamine Phosphoribosylpyrophosphate, subunit 1, domain 1"/>
    <property type="match status" value="1"/>
</dbReference>
<dbReference type="InterPro" id="IPR029055">
    <property type="entry name" value="Ntn_hydrolases_N"/>
</dbReference>
<dbReference type="InterPro" id="IPR000243">
    <property type="entry name" value="Pept_T1A_subB"/>
</dbReference>
<dbReference type="InterPro" id="IPR024689">
    <property type="entry name" value="Proteasome_bsu_C"/>
</dbReference>
<dbReference type="InterPro" id="IPR016050">
    <property type="entry name" value="Proteasome_bsu_CS"/>
</dbReference>
<dbReference type="InterPro" id="IPR001353">
    <property type="entry name" value="Proteasome_sua/b"/>
</dbReference>
<dbReference type="InterPro" id="IPR023333">
    <property type="entry name" value="Proteasome_suB-type"/>
</dbReference>
<dbReference type="PANTHER" id="PTHR32194">
    <property type="entry name" value="METALLOPROTEASE TLDD"/>
    <property type="match status" value="1"/>
</dbReference>
<dbReference type="PANTHER" id="PTHR32194:SF4">
    <property type="entry name" value="PROTEASOME SUBUNIT BETA TYPE-7"/>
    <property type="match status" value="1"/>
</dbReference>
<dbReference type="Pfam" id="PF12465">
    <property type="entry name" value="Pr_beta_C"/>
    <property type="match status" value="1"/>
</dbReference>
<dbReference type="Pfam" id="PF00227">
    <property type="entry name" value="Proteasome"/>
    <property type="match status" value="1"/>
</dbReference>
<dbReference type="PRINTS" id="PR00141">
    <property type="entry name" value="PROTEASOME"/>
</dbReference>
<dbReference type="SUPFAM" id="SSF56235">
    <property type="entry name" value="N-terminal nucleophile aminohydrolases (Ntn hydrolases)"/>
    <property type="match status" value="1"/>
</dbReference>
<dbReference type="PROSITE" id="PS00854">
    <property type="entry name" value="PROTEASOME_BETA_1"/>
    <property type="match status" value="1"/>
</dbReference>
<dbReference type="PROSITE" id="PS51476">
    <property type="entry name" value="PROTEASOME_BETA_2"/>
    <property type="match status" value="1"/>
</dbReference>
<feature type="propeptide" id="PRO_0000026645" description="Removed in mature form">
    <location>
        <begin position="1"/>
        <end position="43"/>
    </location>
</feature>
<feature type="chain" id="PRO_0000026646" description="Proteasome subunit beta type-7">
    <location>
        <begin position="44"/>
        <end position="277"/>
    </location>
</feature>
<feature type="active site" description="Nucleophile" evidence="7 12">
    <location>
        <position position="44"/>
    </location>
</feature>
<feature type="splice variant" id="VSP_056573" description="In isoform 2." evidence="15">
    <original>YQGYIGAALV</original>
    <variation>FWLLGSNGCI</variation>
    <location>
        <begin position="133"/>
        <end position="142"/>
    </location>
</feature>
<feature type="splice variant" id="VSP_056574" description="In isoform 2." evidence="15">
    <location>
        <begin position="143"/>
        <end position="277"/>
    </location>
</feature>
<feature type="sequence variant" id="VAR_013292" description="In dbSNP:rs4574." evidence="5">
    <original>V</original>
    <variation>A</variation>
    <location>
        <position position="39"/>
    </location>
</feature>
<feature type="helix" evidence="22">
    <location>
        <begin position="19"/>
        <end position="32"/>
    </location>
</feature>
<feature type="strand" evidence="20">
    <location>
        <begin position="46"/>
        <end position="51"/>
    </location>
</feature>
<feature type="strand" evidence="20">
    <location>
        <begin position="54"/>
        <end position="60"/>
    </location>
</feature>
<feature type="strand" evidence="20">
    <location>
        <begin position="63"/>
        <end position="65"/>
    </location>
</feature>
<feature type="strand" evidence="20">
    <location>
        <begin position="68"/>
        <end position="73"/>
    </location>
</feature>
<feature type="strand" evidence="20">
    <location>
        <begin position="77"/>
        <end position="81"/>
    </location>
</feature>
<feature type="strand" evidence="20">
    <location>
        <begin position="84"/>
        <end position="91"/>
    </location>
</feature>
<feature type="helix" evidence="20">
    <location>
        <begin position="92"/>
        <end position="113"/>
    </location>
</feature>
<feature type="helix" evidence="20">
    <location>
        <begin position="119"/>
        <end position="133"/>
    </location>
</feature>
<feature type="strand" evidence="19">
    <location>
        <begin position="135"/>
        <end position="137"/>
    </location>
</feature>
<feature type="strand" evidence="20">
    <location>
        <begin position="139"/>
        <end position="147"/>
    </location>
</feature>
<feature type="strand" evidence="20">
    <location>
        <begin position="150"/>
        <end position="156"/>
    </location>
</feature>
<feature type="turn" evidence="19">
    <location>
        <begin position="158"/>
        <end position="160"/>
    </location>
</feature>
<feature type="strand" evidence="20">
    <location>
        <begin position="162"/>
        <end position="164"/>
    </location>
</feature>
<feature type="strand" evidence="20">
    <location>
        <begin position="166"/>
        <end position="171"/>
    </location>
</feature>
<feature type="helix" evidence="20">
    <location>
        <begin position="174"/>
        <end position="184"/>
    </location>
</feature>
<feature type="helix" evidence="20">
    <location>
        <begin position="191"/>
        <end position="208"/>
    </location>
</feature>
<feature type="strand" evidence="21">
    <location>
        <begin position="209"/>
        <end position="211"/>
    </location>
</feature>
<feature type="strand" evidence="20">
    <location>
        <begin position="216"/>
        <end position="222"/>
    </location>
</feature>
<feature type="strand" evidence="20">
    <location>
        <begin position="225"/>
        <end position="233"/>
    </location>
</feature>
<feature type="strand" evidence="20">
    <location>
        <begin position="254"/>
        <end position="261"/>
    </location>
</feature>
<reference key="1">
    <citation type="journal article" date="1996" name="J. Exp. Med.">
        <title>Newly identified pair of proteasomal subunits regulated reciprocally by interferon gamma.</title>
        <authorList>
            <person name="Hisamatsu H."/>
            <person name="Shimbara N."/>
            <person name="Saito Y."/>
            <person name="Kristensen P."/>
            <person name="Hendil K.B."/>
            <person name="Fujiwara T."/>
            <person name="Takahashi E."/>
            <person name="Tanahashi N."/>
            <person name="Tamura T."/>
            <person name="Ichihara A."/>
            <person name="Tanaka K."/>
        </authorList>
    </citation>
    <scope>NUCLEOTIDE SEQUENCE [MRNA] (ISOFORM 1)</scope>
</reference>
<reference key="2">
    <citation type="journal article" date="2004" name="Nat. Genet.">
        <title>Complete sequencing and characterization of 21,243 full-length human cDNAs.</title>
        <authorList>
            <person name="Ota T."/>
            <person name="Suzuki Y."/>
            <person name="Nishikawa T."/>
            <person name="Otsuki T."/>
            <person name="Sugiyama T."/>
            <person name="Irie R."/>
            <person name="Wakamatsu A."/>
            <person name="Hayashi K."/>
            <person name="Sato H."/>
            <person name="Nagai K."/>
            <person name="Kimura K."/>
            <person name="Makita H."/>
            <person name="Sekine M."/>
            <person name="Obayashi M."/>
            <person name="Nishi T."/>
            <person name="Shibahara T."/>
            <person name="Tanaka T."/>
            <person name="Ishii S."/>
            <person name="Yamamoto J."/>
            <person name="Saito K."/>
            <person name="Kawai Y."/>
            <person name="Isono Y."/>
            <person name="Nakamura Y."/>
            <person name="Nagahari K."/>
            <person name="Murakami K."/>
            <person name="Yasuda T."/>
            <person name="Iwayanagi T."/>
            <person name="Wagatsuma M."/>
            <person name="Shiratori A."/>
            <person name="Sudo H."/>
            <person name="Hosoiri T."/>
            <person name="Kaku Y."/>
            <person name="Kodaira H."/>
            <person name="Kondo H."/>
            <person name="Sugawara M."/>
            <person name="Takahashi M."/>
            <person name="Kanda K."/>
            <person name="Yokoi T."/>
            <person name="Furuya T."/>
            <person name="Kikkawa E."/>
            <person name="Omura Y."/>
            <person name="Abe K."/>
            <person name="Kamihara K."/>
            <person name="Katsuta N."/>
            <person name="Sato K."/>
            <person name="Tanikawa M."/>
            <person name="Yamazaki M."/>
            <person name="Ninomiya K."/>
            <person name="Ishibashi T."/>
            <person name="Yamashita H."/>
            <person name="Murakawa K."/>
            <person name="Fujimori K."/>
            <person name="Tanai H."/>
            <person name="Kimata M."/>
            <person name="Watanabe M."/>
            <person name="Hiraoka S."/>
            <person name="Chiba Y."/>
            <person name="Ishida S."/>
            <person name="Ono Y."/>
            <person name="Takiguchi S."/>
            <person name="Watanabe S."/>
            <person name="Yosida M."/>
            <person name="Hotuta T."/>
            <person name="Kusano J."/>
            <person name="Kanehori K."/>
            <person name="Takahashi-Fujii A."/>
            <person name="Hara H."/>
            <person name="Tanase T.-O."/>
            <person name="Nomura Y."/>
            <person name="Togiya S."/>
            <person name="Komai F."/>
            <person name="Hara R."/>
            <person name="Takeuchi K."/>
            <person name="Arita M."/>
            <person name="Imose N."/>
            <person name="Musashino K."/>
            <person name="Yuuki H."/>
            <person name="Oshima A."/>
            <person name="Sasaki N."/>
            <person name="Aotsuka S."/>
            <person name="Yoshikawa Y."/>
            <person name="Matsunawa H."/>
            <person name="Ichihara T."/>
            <person name="Shiohata N."/>
            <person name="Sano S."/>
            <person name="Moriya S."/>
            <person name="Momiyama H."/>
            <person name="Satoh N."/>
            <person name="Takami S."/>
            <person name="Terashima Y."/>
            <person name="Suzuki O."/>
            <person name="Nakagawa S."/>
            <person name="Senoh A."/>
            <person name="Mizoguchi H."/>
            <person name="Goto Y."/>
            <person name="Shimizu F."/>
            <person name="Wakebe H."/>
            <person name="Hishigaki H."/>
            <person name="Watanabe T."/>
            <person name="Sugiyama A."/>
            <person name="Takemoto M."/>
            <person name="Kawakami B."/>
            <person name="Yamazaki M."/>
            <person name="Watanabe K."/>
            <person name="Kumagai A."/>
            <person name="Itakura S."/>
            <person name="Fukuzumi Y."/>
            <person name="Fujimori Y."/>
            <person name="Komiyama M."/>
            <person name="Tashiro H."/>
            <person name="Tanigami A."/>
            <person name="Fujiwara T."/>
            <person name="Ono T."/>
            <person name="Yamada K."/>
            <person name="Fujii Y."/>
            <person name="Ozaki K."/>
            <person name="Hirao M."/>
            <person name="Ohmori Y."/>
            <person name="Kawabata A."/>
            <person name="Hikiji T."/>
            <person name="Kobatake N."/>
            <person name="Inagaki H."/>
            <person name="Ikema Y."/>
            <person name="Okamoto S."/>
            <person name="Okitani R."/>
            <person name="Kawakami T."/>
            <person name="Noguchi S."/>
            <person name="Itoh T."/>
            <person name="Shigeta K."/>
            <person name="Senba T."/>
            <person name="Matsumura K."/>
            <person name="Nakajima Y."/>
            <person name="Mizuno T."/>
            <person name="Morinaga M."/>
            <person name="Sasaki M."/>
            <person name="Togashi T."/>
            <person name="Oyama M."/>
            <person name="Hata H."/>
            <person name="Watanabe M."/>
            <person name="Komatsu T."/>
            <person name="Mizushima-Sugano J."/>
            <person name="Satoh T."/>
            <person name="Shirai Y."/>
            <person name="Takahashi Y."/>
            <person name="Nakagawa K."/>
            <person name="Okumura K."/>
            <person name="Nagase T."/>
            <person name="Nomura N."/>
            <person name="Kikuchi H."/>
            <person name="Masuho Y."/>
            <person name="Yamashita R."/>
            <person name="Nakai K."/>
            <person name="Yada T."/>
            <person name="Nakamura Y."/>
            <person name="Ohara O."/>
            <person name="Isogai T."/>
            <person name="Sugano S."/>
        </authorList>
    </citation>
    <scope>NUCLEOTIDE SEQUENCE [LARGE SCALE MRNA] (ISOFORM 2)</scope>
    <source>
        <tissue>Thymus</tissue>
    </source>
</reference>
<reference key="3">
    <citation type="journal article" date="2004" name="Nature">
        <title>DNA sequence and analysis of human chromosome 9.</title>
        <authorList>
            <person name="Humphray S.J."/>
            <person name="Oliver K."/>
            <person name="Hunt A.R."/>
            <person name="Plumb R.W."/>
            <person name="Loveland J.E."/>
            <person name="Howe K.L."/>
            <person name="Andrews T.D."/>
            <person name="Searle S."/>
            <person name="Hunt S.E."/>
            <person name="Scott C.E."/>
            <person name="Jones M.C."/>
            <person name="Ainscough R."/>
            <person name="Almeida J.P."/>
            <person name="Ambrose K.D."/>
            <person name="Ashwell R.I.S."/>
            <person name="Babbage A.K."/>
            <person name="Babbage S."/>
            <person name="Bagguley C.L."/>
            <person name="Bailey J."/>
            <person name="Banerjee R."/>
            <person name="Barker D.J."/>
            <person name="Barlow K.F."/>
            <person name="Bates K."/>
            <person name="Beasley H."/>
            <person name="Beasley O."/>
            <person name="Bird C.P."/>
            <person name="Bray-Allen S."/>
            <person name="Brown A.J."/>
            <person name="Brown J.Y."/>
            <person name="Burford D."/>
            <person name="Burrill W."/>
            <person name="Burton J."/>
            <person name="Carder C."/>
            <person name="Carter N.P."/>
            <person name="Chapman J.C."/>
            <person name="Chen Y."/>
            <person name="Clarke G."/>
            <person name="Clark S.Y."/>
            <person name="Clee C.M."/>
            <person name="Clegg S."/>
            <person name="Collier R.E."/>
            <person name="Corby N."/>
            <person name="Crosier M."/>
            <person name="Cummings A.T."/>
            <person name="Davies J."/>
            <person name="Dhami P."/>
            <person name="Dunn M."/>
            <person name="Dutta I."/>
            <person name="Dyer L.W."/>
            <person name="Earthrowl M.E."/>
            <person name="Faulkner L."/>
            <person name="Fleming C.J."/>
            <person name="Frankish A."/>
            <person name="Frankland J.A."/>
            <person name="French L."/>
            <person name="Fricker D.G."/>
            <person name="Garner P."/>
            <person name="Garnett J."/>
            <person name="Ghori J."/>
            <person name="Gilbert J.G.R."/>
            <person name="Glison C."/>
            <person name="Grafham D.V."/>
            <person name="Gribble S."/>
            <person name="Griffiths C."/>
            <person name="Griffiths-Jones S."/>
            <person name="Grocock R."/>
            <person name="Guy J."/>
            <person name="Hall R.E."/>
            <person name="Hammond S."/>
            <person name="Harley J.L."/>
            <person name="Harrison E.S.I."/>
            <person name="Hart E.A."/>
            <person name="Heath P.D."/>
            <person name="Henderson C.D."/>
            <person name="Hopkins B.L."/>
            <person name="Howard P.J."/>
            <person name="Howden P.J."/>
            <person name="Huckle E."/>
            <person name="Johnson C."/>
            <person name="Johnson D."/>
            <person name="Joy A.A."/>
            <person name="Kay M."/>
            <person name="Keenan S."/>
            <person name="Kershaw J.K."/>
            <person name="Kimberley A.M."/>
            <person name="King A."/>
            <person name="Knights A."/>
            <person name="Laird G.K."/>
            <person name="Langford C."/>
            <person name="Lawlor S."/>
            <person name="Leongamornlert D.A."/>
            <person name="Leversha M."/>
            <person name="Lloyd C."/>
            <person name="Lloyd D.M."/>
            <person name="Lovell J."/>
            <person name="Martin S."/>
            <person name="Mashreghi-Mohammadi M."/>
            <person name="Matthews L."/>
            <person name="McLaren S."/>
            <person name="McLay K.E."/>
            <person name="McMurray A."/>
            <person name="Milne S."/>
            <person name="Nickerson T."/>
            <person name="Nisbett J."/>
            <person name="Nordsiek G."/>
            <person name="Pearce A.V."/>
            <person name="Peck A.I."/>
            <person name="Porter K.M."/>
            <person name="Pandian R."/>
            <person name="Pelan S."/>
            <person name="Phillimore B."/>
            <person name="Povey S."/>
            <person name="Ramsey Y."/>
            <person name="Rand V."/>
            <person name="Scharfe M."/>
            <person name="Sehra H.K."/>
            <person name="Shownkeen R."/>
            <person name="Sims S.K."/>
            <person name="Skuce C.D."/>
            <person name="Smith M."/>
            <person name="Steward C.A."/>
            <person name="Swarbreck D."/>
            <person name="Sycamore N."/>
            <person name="Tester J."/>
            <person name="Thorpe A."/>
            <person name="Tracey A."/>
            <person name="Tromans A."/>
            <person name="Thomas D.W."/>
            <person name="Wall M."/>
            <person name="Wallis J.M."/>
            <person name="West A.P."/>
            <person name="Whitehead S.L."/>
            <person name="Willey D.L."/>
            <person name="Williams S.A."/>
            <person name="Wilming L."/>
            <person name="Wray P.W."/>
            <person name="Young L."/>
            <person name="Ashurst J.L."/>
            <person name="Coulson A."/>
            <person name="Blocker H."/>
            <person name="Durbin R.M."/>
            <person name="Sulston J.E."/>
            <person name="Hubbard T."/>
            <person name="Jackson M.J."/>
            <person name="Bentley D.R."/>
            <person name="Beck S."/>
            <person name="Rogers J."/>
            <person name="Dunham I."/>
        </authorList>
    </citation>
    <scope>NUCLEOTIDE SEQUENCE [LARGE SCALE GENOMIC DNA]</scope>
</reference>
<reference key="4">
    <citation type="submission" date="2005-07" db="EMBL/GenBank/DDBJ databases">
        <authorList>
            <person name="Mural R.J."/>
            <person name="Istrail S."/>
            <person name="Sutton G.G."/>
            <person name="Florea L."/>
            <person name="Halpern A.L."/>
            <person name="Mobarry C.M."/>
            <person name="Lippert R."/>
            <person name="Walenz B."/>
            <person name="Shatkay H."/>
            <person name="Dew I."/>
            <person name="Miller J.R."/>
            <person name="Flanigan M.J."/>
            <person name="Edwards N.J."/>
            <person name="Bolanos R."/>
            <person name="Fasulo D."/>
            <person name="Halldorsson B.V."/>
            <person name="Hannenhalli S."/>
            <person name="Turner R."/>
            <person name="Yooseph S."/>
            <person name="Lu F."/>
            <person name="Nusskern D.R."/>
            <person name="Shue B.C."/>
            <person name="Zheng X.H."/>
            <person name="Zhong F."/>
            <person name="Delcher A.L."/>
            <person name="Huson D.H."/>
            <person name="Kravitz S.A."/>
            <person name="Mouchard L."/>
            <person name="Reinert K."/>
            <person name="Remington K.A."/>
            <person name="Clark A.G."/>
            <person name="Waterman M.S."/>
            <person name="Eichler E.E."/>
            <person name="Adams M.D."/>
            <person name="Hunkapiller M.W."/>
            <person name="Myers E.W."/>
            <person name="Venter J.C."/>
        </authorList>
    </citation>
    <scope>NUCLEOTIDE SEQUENCE [LARGE SCALE GENOMIC DNA]</scope>
</reference>
<reference key="5">
    <citation type="journal article" date="2004" name="Genome Res.">
        <title>The status, quality, and expansion of the NIH full-length cDNA project: the Mammalian Gene Collection (MGC).</title>
        <authorList>
            <consortium name="The MGC Project Team"/>
        </authorList>
    </citation>
    <scope>NUCLEOTIDE SEQUENCE [LARGE SCALE MRNA] (ISOFORM 1)</scope>
    <scope>VARIANT ALA-39</scope>
    <source>
        <tissue>Lung</tissue>
        <tissue>Urinary bladder</tissue>
        <tissue>Uterus</tissue>
    </source>
</reference>
<reference key="6">
    <citation type="submission" date="2008-12" db="UniProtKB">
        <authorList>
            <person name="Lubec G."/>
            <person name="Chen W.-Q."/>
            <person name="Sun Y."/>
        </authorList>
    </citation>
    <scope>PROTEIN SEQUENCE OF 165-184 AND 259-277</scope>
    <scope>IDENTIFICATION BY MASS SPECTROMETRY</scope>
    <source>
        <tissue>Fetal brain cortex</tissue>
    </source>
</reference>
<reference key="7">
    <citation type="journal article" date="1996" name="Nature">
        <title>A role for the proteasome regulator PA28alpha in antigen presentation.</title>
        <authorList>
            <person name="Groettrup M."/>
            <person name="Soza A."/>
            <person name="Eggers M."/>
            <person name="Kuehn L."/>
            <person name="Dick T.P."/>
            <person name="Schild H."/>
            <person name="Rammensee H.G."/>
            <person name="Koszinowski U.H."/>
            <person name="Kloetzel P.M."/>
        </authorList>
    </citation>
    <scope>FUNCTION IN ANTIGEN PRESENTATION</scope>
</reference>
<reference key="8">
    <citation type="journal article" date="2002" name="Mol. Biol. Cell">
        <title>Clastosome: a subtype of nuclear body enriched in 19S and 20S proteasomes, ubiquitin, and protein substrates of proteasome.</title>
        <authorList>
            <person name="Lafarga M."/>
            <person name="Berciano M.T."/>
            <person name="Pena E."/>
            <person name="Mayo I."/>
            <person name="Castano J.G."/>
            <person name="Bohmann D."/>
            <person name="Rodrigues J.P."/>
            <person name="Tavanez J.P."/>
            <person name="Carmo-Fonseca M."/>
        </authorList>
    </citation>
    <scope>SUBCELLULAR LOCATION</scope>
</reference>
<reference key="9">
    <citation type="journal article" date="2003" name="FEBS Lett.">
        <title>Human immunodeficiency virus-1 Tat protein interacts with distinct proteasomal alpha and beta subunits.</title>
        <authorList>
            <person name="Apcher G.S."/>
            <person name="Heink S."/>
            <person name="Zantopf D."/>
            <person name="Kloetzel P.-M."/>
            <person name="Schmid H.-P."/>
            <person name="Mayer R.J."/>
            <person name="Krueger E."/>
        </authorList>
    </citation>
    <scope>INTERACTION WITH HIV-1 TAT (MICROBIAL INFECTION)</scope>
</reference>
<reference key="10">
    <citation type="journal article" date="2004" name="Biomacromolecules">
        <title>20S proteasome prevents aggregation of heat-denatured proteins without PA700 regulatory subcomplex like a molecular chaperone.</title>
        <authorList>
            <person name="Yano M."/>
            <person name="Koumoto Y."/>
            <person name="Kanesaki Y."/>
            <person name="Wu X."/>
            <person name="Kido H."/>
        </authorList>
    </citation>
    <scope>FUNCTION</scope>
</reference>
<reference key="11">
    <citation type="journal article" date="2007" name="Biochemistry">
        <title>Mass spectrometric characterization of the affinity-purified human 26S proteasome complex.</title>
        <authorList>
            <person name="Wang X."/>
            <person name="Chen C.-F."/>
            <person name="Baker P.R."/>
            <person name="Chen P.-L."/>
            <person name="Kaiser P."/>
            <person name="Huang L."/>
        </authorList>
    </citation>
    <scope>IDENTIFICATION BY MASS SPECTROMETRY [LARGE SCALE ANALYSIS]</scope>
    <source>
        <tissue>Embryonic kidney</tissue>
    </source>
</reference>
<reference key="12">
    <citation type="journal article" date="2008" name="J. Proteome Res.">
        <title>Proteomic expression analysis of surgical human colorectal cancer tissues: up-regulation of PSB7, PRDX1, and SRP9 and hypoxic adaptation in cancer.</title>
        <authorList>
            <person name="Rho J.H."/>
            <person name="Qin S."/>
            <person name="Wang J.Y."/>
            <person name="Roehrl M.H."/>
        </authorList>
    </citation>
    <scope>SUBCELLULAR LOCATION</scope>
    <scope>TISSUE SPECIFICITY</scope>
    <scope>IDENTIFICATION BY MASS SPECTROMETRY</scope>
</reference>
<reference key="13">
    <citation type="journal article" date="2010" name="Sci. Signal.">
        <title>Quantitative phosphoproteomics reveals widespread full phosphorylation site occupancy during mitosis.</title>
        <authorList>
            <person name="Olsen J.V."/>
            <person name="Vermeulen M."/>
            <person name="Santamaria A."/>
            <person name="Kumar C."/>
            <person name="Miller M.L."/>
            <person name="Jensen L.J."/>
            <person name="Gnad F."/>
            <person name="Cox J."/>
            <person name="Jensen T.S."/>
            <person name="Nigg E.A."/>
            <person name="Brunak S."/>
            <person name="Mann M."/>
        </authorList>
    </citation>
    <scope>IDENTIFICATION BY MASS SPECTROMETRY [LARGE SCALE ANALYSIS]</scope>
    <source>
        <tissue>Cervix carcinoma</tissue>
    </source>
</reference>
<reference key="14">
    <citation type="journal article" date="2011" name="BMC Syst. Biol.">
        <title>Initial characterization of the human central proteome.</title>
        <authorList>
            <person name="Burkard T.R."/>
            <person name="Planyavsky M."/>
            <person name="Kaupe I."/>
            <person name="Breitwieser F.P."/>
            <person name="Buerckstuemmer T."/>
            <person name="Bennett K.L."/>
            <person name="Superti-Furga G."/>
            <person name="Colinge J."/>
        </authorList>
    </citation>
    <scope>IDENTIFICATION BY MASS SPECTROMETRY [LARGE SCALE ANALYSIS]</scope>
</reference>
<reference key="15">
    <citation type="journal article" date="2013" name="Annu. Rev. Biochem.">
        <title>Molecular architecture and assembly of the eukaryotic proteasome.</title>
        <authorList>
            <person name="Tomko R.J. Jr."/>
            <person name="Hochstrasser M."/>
        </authorList>
    </citation>
    <scope>NOMENCLATURE</scope>
</reference>
<reference key="16">
    <citation type="journal article" date="2014" name="J. Proteomics">
        <title>An enzyme assisted RP-RPLC approach for in-depth analysis of human liver phosphoproteome.</title>
        <authorList>
            <person name="Bian Y."/>
            <person name="Song C."/>
            <person name="Cheng K."/>
            <person name="Dong M."/>
            <person name="Wang F."/>
            <person name="Huang J."/>
            <person name="Sun D."/>
            <person name="Wang L."/>
            <person name="Ye M."/>
            <person name="Zou H."/>
        </authorList>
    </citation>
    <scope>IDENTIFICATION BY MASS SPECTROMETRY [LARGE SCALE ANALYSIS]</scope>
    <source>
        <tissue>Liver</tissue>
    </source>
</reference>
<reference key="17">
    <citation type="journal article" date="2016" name="Biol. Chem.">
        <title>Human 20S proteasome activity towards fluorogenic peptides of various chain lengths.</title>
        <authorList>
            <person name="Rut W."/>
            <person name="Drag M."/>
        </authorList>
    </citation>
    <scope>FUNCTION</scope>
    <scope>CATALYTIC ACTIVITY</scope>
</reference>
<reference key="18">
    <citation type="journal article" date="2015" name="Nat. Commun.">
        <title>Cryo-EM reveals the conformation of a substrate analogue in the human 20S proteasome core.</title>
        <authorList>
            <person name="da Fonseca P.C."/>
            <person name="Morris E.P."/>
        </authorList>
    </citation>
    <scope>STRUCTURE BY ELECTRON MICROSCOPY (3.50 ANGSTROMS)</scope>
    <scope>SUBUNIT</scope>
</reference>
<reference key="19">
    <citation type="journal article" date="2015" name="Structure">
        <title>Crystal structure of the human 20S proteasome in complex with carfilzomib.</title>
        <authorList>
            <person name="Harshbarger W."/>
            <person name="Miller C."/>
            <person name="Diedrich C."/>
            <person name="Sacchettini J."/>
        </authorList>
    </citation>
    <scope>X-RAY CRYSTALLOGRAPHY (2.60 ANGSTROMS)</scope>
    <scope>SUBUNIT</scope>
    <scope>ACTIVE SITE</scope>
</reference>
<reference key="20">
    <citation type="journal article" date="2016" name="Nat. Struct. Mol. Biol.">
        <title>An atomic structure of the human 26S proteasome.</title>
        <authorList>
            <person name="Huang X."/>
            <person name="Luan B."/>
            <person name="Wu J."/>
            <person name="Shi Y."/>
        </authorList>
    </citation>
    <scope>STRUCTURE BY ELECTRON MICROSCOPY (3.50 ANGSTROMS)</scope>
    <scope>SUBUNIT</scope>
</reference>
<reference key="21">
    <citation type="journal article" date="2016" name="Proc. Natl. Acad. Sci. U.S.A.">
        <title>Structure of the human 26S proteasome at a resolution of 3.9 Aa.</title>
        <authorList>
            <person name="Schweitzer A."/>
            <person name="Aufderheide A."/>
            <person name="Rudack T."/>
            <person name="Beck F."/>
            <person name="Pfeifer G."/>
            <person name="Plitzko J.M."/>
            <person name="Sakata E."/>
            <person name="Schulten K."/>
            <person name="Foerster F."/>
            <person name="Baumeister W."/>
        </authorList>
    </citation>
    <scope>STRUCTURE BY ELECTRON MICROSCOPY (4.02 ANGSTROMS)</scope>
    <scope>SUBUNIT</scope>
</reference>
<reference key="22">
    <citation type="journal article" date="2016" name="Science">
        <title>The inhibition mechanism of human 20S proteasomes enables next-generation inhibitor design.</title>
        <authorList>
            <person name="Schrader J."/>
            <person name="Henneberg F."/>
            <person name="Mata R.A."/>
            <person name="Tittmann K."/>
            <person name="Schneider T.R."/>
            <person name="Stark H."/>
            <person name="Bourenkov G."/>
            <person name="Chari A."/>
        </authorList>
    </citation>
    <scope>X-RAY CRYSTALLOGRAPHY (1.80 ANGSTROMS)</scope>
    <scope>SUBUNIT</scope>
    <scope>ACTIVE SITE</scope>
</reference>
<reference key="23">
    <citation type="journal article" date="2021" name="Nature">
        <title>AKIRIN2 controls the nuclear import of proteasomes in vertebrates.</title>
        <authorList>
            <person name="de Almeida M."/>
            <person name="Hinterndorfer M."/>
            <person name="Brunner H."/>
            <person name="Grishkovskaya I."/>
            <person name="Singh K."/>
            <person name="Schleiffer A."/>
            <person name="Jude J."/>
            <person name="Deswal S."/>
            <person name="Kalis R."/>
            <person name="Vunjak M."/>
            <person name="Lendl T."/>
            <person name="Imre R."/>
            <person name="Roitinger E."/>
            <person name="Neumann T."/>
            <person name="Kandolf S."/>
            <person name="Schutzbier M."/>
            <person name="Mechtler K."/>
            <person name="Versteeg G.A."/>
            <person name="Haselbach D."/>
            <person name="Zuber J."/>
        </authorList>
    </citation>
    <scope>STRUCTURE BY ELECTRON MICROSCOPY (2.80 ANGSTROMS) IN COMPLEX WITH AKIRIN2</scope>
    <scope>SUBUNIT</scope>
    <scope>SUBCELLULAR LOCATION</scope>
</reference>
<protein>
    <recommendedName>
        <fullName evidence="17">Proteasome subunit beta type-7</fullName>
        <ecNumber evidence="9">3.4.25.1</ecNumber>
    </recommendedName>
    <alternativeName>
        <fullName>Macropain chain Z</fullName>
    </alternativeName>
    <alternativeName>
        <fullName>Multicatalytic endopeptidase complex chain Z</fullName>
    </alternativeName>
    <alternativeName>
        <fullName>Proteasome subunit Z</fullName>
    </alternativeName>
    <alternativeName>
        <fullName evidence="16">Proteasome subunit beta-2</fullName>
        <shortName evidence="16">beta-2</shortName>
    </alternativeName>
</protein>
<comment type="function">
    <text evidence="4 9 14">Component of the 20S core proteasome complex involved in the proteolytic degradation of most intracellular proteins. This complex plays numerous essential roles within the cell by associating with different regulatory particles. Associated with two 19S regulatory particles, forms the 26S proteasome and thus participates in the ATP-dependent degradation of ubiquitinated proteins. The 26S proteasome plays a key role in the maintenance of protein homeostasis by removing misfolded or damaged proteins that could impair cellular functions, and by removing proteins whose functions are no longer required. Associated with the PA200 or PA28, the 20S proteasome mediates ubiquitin-independent protein degradation. This type of proteolysis is required in several pathways including spermatogenesis (20S-PA200 complex) or generation of a subset of MHC class I-presented antigenic peptides (20S-PA28 complex). Within the 20S core complex, PSMB7 displays a trypsin-like activity.</text>
</comment>
<comment type="catalytic activity">
    <reaction evidence="9">
        <text>Cleavage of peptide bonds with very broad specificity.</text>
        <dbReference type="EC" id="3.4.25.1"/>
    </reaction>
</comment>
<comment type="subunit">
    <text evidence="7 8 10 11 12 13">The 26S proteasome consists of a 20S proteasome core and two 19S regulatory subunits. The 20S proteasome core is a barrel-shaped complex made of 28 subunits that are arranged in four stacked rings. The two outer rings are each formed by seven alpha subunits, and the two inner rings are formed by seven beta subunits. The proteolytic activity is exerted by three beta-subunits PSMB5, PSMB6 and PSMB7.</text>
</comment>
<comment type="subunit">
    <text evidence="3">(Microbial infection) Interacts with HIV-1 Tat protein.</text>
</comment>
<comment type="interaction">
    <interactant intactId="EBI-603319">
        <id>Q99436</id>
    </interactant>
    <interactant intactId="EBI-696895">
        <id>Q9Y244</id>
        <label>POMP</label>
    </interactant>
    <organismsDiffer>false</organismsDiffer>
    <experiments>6</experiments>
</comment>
<comment type="interaction">
    <interactant intactId="EBI-603319">
        <id>Q99436</id>
    </interactant>
    <interactant intactId="EBI-372273">
        <id>P20618</id>
        <label>PSMB1</label>
    </interactant>
    <organismsDiffer>false</organismsDiffer>
    <experiments>13</experiments>
</comment>
<comment type="interaction">
    <interactant intactId="EBI-603319">
        <id>Q99436</id>
    </interactant>
    <interactant intactId="EBI-603340">
        <id>P49720</id>
        <label>PSMB3</label>
    </interactant>
    <organismsDiffer>false</organismsDiffer>
    <experiments>6</experiments>
</comment>
<comment type="interaction">
    <interactant intactId="EBI-603319">
        <id>Q99436</id>
    </interactant>
    <interactant intactId="EBI-603350">
        <id>P28070</id>
        <label>PSMB4</label>
    </interactant>
    <organismsDiffer>false</organismsDiffer>
    <experiments>4</experiments>
</comment>
<comment type="interaction">
    <interactant intactId="EBI-603319">
        <id>Q99436</id>
    </interactant>
    <interactant intactId="EBI-357828">
        <id>P28074</id>
        <label>PSMB5</label>
    </interactant>
    <organismsDiffer>false</organismsDiffer>
    <experiments>10</experiments>
</comment>
<comment type="interaction">
    <interactant intactId="EBI-603319">
        <id>Q99436</id>
    </interactant>
    <interactant intactId="EBI-359288">
        <id>P28072</id>
        <label>PSMB6</label>
    </interactant>
    <organismsDiffer>false</organismsDiffer>
    <experiments>5</experiments>
</comment>
<comment type="interaction">
    <interactant intactId="EBI-603319">
        <id>Q99436</id>
    </interactant>
    <interactant intactId="EBI-603300">
        <id>P28065</id>
        <label>PSMB9</label>
    </interactant>
    <organismsDiffer>false</organismsDiffer>
    <experiments>10</experiments>
</comment>
<comment type="interaction">
    <interactant intactId="EBI-603319">
        <id>Q99436</id>
    </interactant>
    <interactant intactId="EBI-359318">
        <id>P55036</id>
        <label>PSMD4</label>
    </interactant>
    <organismsDiffer>false</organismsDiffer>
    <experiments>3</experiments>
</comment>
<comment type="subcellular location">
    <subcellularLocation>
        <location evidence="2 6 13">Cytoplasm</location>
    </subcellularLocation>
    <subcellularLocation>
        <location evidence="2 6 13">Nucleus</location>
    </subcellularLocation>
    <text evidence="13">Translocated from the cytoplasm into the nucleus following interaction with AKIRIN2, which bridges the proteasome with the nuclear import receptor IPO9.</text>
</comment>
<comment type="alternative products">
    <event type="alternative splicing"/>
    <isoform>
        <id>Q99436-1</id>
        <name>1</name>
        <sequence type="displayed"/>
    </isoform>
    <isoform>
        <id>Q99436-2</id>
        <name>2</name>
        <sequence type="described" ref="VSP_056573 VSP_056574"/>
    </isoform>
</comment>
<comment type="tissue specificity">
    <text evidence="6">Expressed at a low level in colonic mucosa. Up-regulated in colorectal cancer tissues.</text>
</comment>
<comment type="similarity">
    <text evidence="1">Belongs to the peptidase T1B family.</text>
</comment>
<sequence>MAAVSVYAPPVGGFSFDNCRRNAVLEADFAKRGYKLPKVRKTGTTIAGVVYKDGIVLGADTRATEGMVVADKNCSKIHFISPNIYCCGAGTAADTDMTTQLISSNLELHSLSTGRLPRVVTANRMLKQMLFRYQGYIGAALVLGGVDVTGPHLYSIYPHGSTDKLPYVTMGSGSLAAMAVFEDKFRPDMEEEEAKNLVSEAIAAGIFNDLGSGSNIDLCVISKNKLDFLRPYTVPNKKGTRLGRYRCEKGTTAVLTEKITPLEIEVLEETVQTMDTS</sequence>